<feature type="chain" id="PRO_0000293927" description="Small ribosomal subunit protein uS3">
    <location>
        <begin position="1"/>
        <end position="237"/>
    </location>
</feature>
<feature type="domain" description="KH type-2" evidence="1">
    <location>
        <begin position="17"/>
        <end position="86"/>
    </location>
</feature>
<reference key="1">
    <citation type="journal article" date="2016" name="Stand. Genomic Sci.">
        <title>Complete genome sequence of Methanospirillum hungatei type strain JF1.</title>
        <authorList>
            <person name="Gunsalus R.P."/>
            <person name="Cook L.E."/>
            <person name="Crable B."/>
            <person name="Rohlin L."/>
            <person name="McDonald E."/>
            <person name="Mouttaki H."/>
            <person name="Sieber J.R."/>
            <person name="Poweleit N."/>
            <person name="Zhou H."/>
            <person name="Lapidus A.L."/>
            <person name="Daligault H.E."/>
            <person name="Land M."/>
            <person name="Gilna P."/>
            <person name="Ivanova N."/>
            <person name="Kyrpides N."/>
            <person name="Culley D.E."/>
            <person name="McInerney M.J."/>
        </authorList>
    </citation>
    <scope>NUCLEOTIDE SEQUENCE [LARGE SCALE GENOMIC DNA]</scope>
    <source>
        <strain>ATCC 27890 / DSM 864 / NBRC 100397 / JF-1</strain>
    </source>
</reference>
<dbReference type="EMBL" id="CP000254">
    <property type="protein sequence ID" value="ABD41952.1"/>
    <property type="molecule type" value="Genomic_DNA"/>
</dbReference>
<dbReference type="RefSeq" id="WP_011449210.1">
    <property type="nucleotide sequence ID" value="NC_007796.1"/>
</dbReference>
<dbReference type="SMR" id="Q2FT39"/>
<dbReference type="FunCoup" id="Q2FT39">
    <property type="interactions" value="166"/>
</dbReference>
<dbReference type="STRING" id="323259.Mhun_2247"/>
<dbReference type="EnsemblBacteria" id="ABD41952">
    <property type="protein sequence ID" value="ABD41952"/>
    <property type="gene ID" value="Mhun_2247"/>
</dbReference>
<dbReference type="GeneID" id="3923949"/>
<dbReference type="KEGG" id="mhu:Mhun_2247"/>
<dbReference type="eggNOG" id="arCOG04097">
    <property type="taxonomic scope" value="Archaea"/>
</dbReference>
<dbReference type="HOGENOM" id="CLU_058591_1_1_2"/>
<dbReference type="InParanoid" id="Q2FT39"/>
<dbReference type="OrthoDB" id="9126at2157"/>
<dbReference type="Proteomes" id="UP000001941">
    <property type="component" value="Chromosome"/>
</dbReference>
<dbReference type="GO" id="GO:0022627">
    <property type="term" value="C:cytosolic small ribosomal subunit"/>
    <property type="evidence" value="ECO:0007669"/>
    <property type="project" value="TreeGrafter"/>
</dbReference>
<dbReference type="GO" id="GO:0019843">
    <property type="term" value="F:rRNA binding"/>
    <property type="evidence" value="ECO:0007669"/>
    <property type="project" value="UniProtKB-UniRule"/>
</dbReference>
<dbReference type="GO" id="GO:0003735">
    <property type="term" value="F:structural constituent of ribosome"/>
    <property type="evidence" value="ECO:0007669"/>
    <property type="project" value="InterPro"/>
</dbReference>
<dbReference type="GO" id="GO:0006412">
    <property type="term" value="P:translation"/>
    <property type="evidence" value="ECO:0007669"/>
    <property type="project" value="UniProtKB-UniRule"/>
</dbReference>
<dbReference type="CDD" id="cd02411">
    <property type="entry name" value="KH-II_30S_S3_arch"/>
    <property type="match status" value="1"/>
</dbReference>
<dbReference type="FunFam" id="3.30.300.20:FF:000001">
    <property type="entry name" value="30S ribosomal protein S3"/>
    <property type="match status" value="1"/>
</dbReference>
<dbReference type="Gene3D" id="3.30.300.20">
    <property type="match status" value="1"/>
</dbReference>
<dbReference type="Gene3D" id="3.30.1140.32">
    <property type="entry name" value="Ribosomal protein S3, C-terminal domain"/>
    <property type="match status" value="1"/>
</dbReference>
<dbReference type="HAMAP" id="MF_01309_A">
    <property type="entry name" value="Ribosomal_uS3_A"/>
    <property type="match status" value="1"/>
</dbReference>
<dbReference type="InterPro" id="IPR004087">
    <property type="entry name" value="KH_dom"/>
</dbReference>
<dbReference type="InterPro" id="IPR015946">
    <property type="entry name" value="KH_dom-like_a/b"/>
</dbReference>
<dbReference type="InterPro" id="IPR004044">
    <property type="entry name" value="KH_dom_type_2"/>
</dbReference>
<dbReference type="InterPro" id="IPR009019">
    <property type="entry name" value="KH_sf_prok-type"/>
</dbReference>
<dbReference type="InterPro" id="IPR036419">
    <property type="entry name" value="Ribosomal_S3_C_sf"/>
</dbReference>
<dbReference type="InterPro" id="IPR027488">
    <property type="entry name" value="Ribosomal_uS3_arc"/>
</dbReference>
<dbReference type="InterPro" id="IPR001351">
    <property type="entry name" value="Ribosomal_uS3_C"/>
</dbReference>
<dbReference type="InterPro" id="IPR005703">
    <property type="entry name" value="Ribosomal_uS3_euk/arc"/>
</dbReference>
<dbReference type="NCBIfam" id="NF003219">
    <property type="entry name" value="PRK04191.1"/>
    <property type="match status" value="1"/>
</dbReference>
<dbReference type="NCBIfam" id="TIGR01008">
    <property type="entry name" value="uS3_euk_arch"/>
    <property type="match status" value="1"/>
</dbReference>
<dbReference type="PANTHER" id="PTHR11760">
    <property type="entry name" value="30S/40S RIBOSOMAL PROTEIN S3"/>
    <property type="match status" value="1"/>
</dbReference>
<dbReference type="PANTHER" id="PTHR11760:SF32">
    <property type="entry name" value="SMALL RIBOSOMAL SUBUNIT PROTEIN US3"/>
    <property type="match status" value="1"/>
</dbReference>
<dbReference type="Pfam" id="PF07650">
    <property type="entry name" value="KH_2"/>
    <property type="match status" value="1"/>
</dbReference>
<dbReference type="Pfam" id="PF00189">
    <property type="entry name" value="Ribosomal_S3_C"/>
    <property type="match status" value="1"/>
</dbReference>
<dbReference type="SMART" id="SM00322">
    <property type="entry name" value="KH"/>
    <property type="match status" value="1"/>
</dbReference>
<dbReference type="SUPFAM" id="SSF54814">
    <property type="entry name" value="Prokaryotic type KH domain (KH-domain type II)"/>
    <property type="match status" value="1"/>
</dbReference>
<dbReference type="SUPFAM" id="SSF54821">
    <property type="entry name" value="Ribosomal protein S3 C-terminal domain"/>
    <property type="match status" value="1"/>
</dbReference>
<dbReference type="PROSITE" id="PS50823">
    <property type="entry name" value="KH_TYPE_2"/>
    <property type="match status" value="1"/>
</dbReference>
<proteinExistence type="inferred from homology"/>
<comment type="function">
    <text evidence="1">Binds the lower part of the 30S subunit head.</text>
</comment>
<comment type="subunit">
    <text evidence="1">Part of the 30S ribosomal subunit.</text>
</comment>
<comment type="similarity">
    <text evidence="1">Belongs to the universal ribosomal protein uS3 family.</text>
</comment>
<protein>
    <recommendedName>
        <fullName evidence="1">Small ribosomal subunit protein uS3</fullName>
    </recommendedName>
    <alternativeName>
        <fullName evidence="2">30S ribosomal protein S3</fullName>
    </alternativeName>
</protein>
<accession>Q2FT39</accession>
<sequence length="237" mass="26038">MAVERKFVADGVRKVRVERHLGHELKRAGYGGMDLIRTPLGTQVTIFAEKPGIVIGKGGKVVRTLTQDLATTYGVESPQIEVQQVDNPNLNAQIMAERLASALERGWYFRKAGSSTLRRIMDSGALGCEVVISGKLTGARGRVQKFTEGYIKHSGDPVNTLVDKGYAVAIKKLGVIGVQVRLIPPGAQLPDHFEVTAAVTKKQRNMAHITRIPSEYDEEDLDLDAIVNEPDDFMEEE</sequence>
<organism>
    <name type="scientific">Methanospirillum hungatei JF-1 (strain ATCC 27890 / DSM 864 / NBRC 100397 / JF-1)</name>
    <dbReference type="NCBI Taxonomy" id="323259"/>
    <lineage>
        <taxon>Archaea</taxon>
        <taxon>Methanobacteriati</taxon>
        <taxon>Methanobacteriota</taxon>
        <taxon>Stenosarchaea group</taxon>
        <taxon>Methanomicrobia</taxon>
        <taxon>Methanomicrobiales</taxon>
        <taxon>Methanospirillaceae</taxon>
        <taxon>Methanospirillum</taxon>
    </lineage>
</organism>
<evidence type="ECO:0000255" key="1">
    <source>
        <dbReference type="HAMAP-Rule" id="MF_01309"/>
    </source>
</evidence>
<evidence type="ECO:0000305" key="2"/>
<keyword id="KW-1185">Reference proteome</keyword>
<keyword id="KW-0687">Ribonucleoprotein</keyword>
<keyword id="KW-0689">Ribosomal protein</keyword>
<keyword id="KW-0694">RNA-binding</keyword>
<keyword id="KW-0699">rRNA-binding</keyword>
<name>RS3_METHJ</name>
<gene>
    <name evidence="1" type="primary">rps3</name>
    <name type="ordered locus">Mhun_2247</name>
</gene>